<evidence type="ECO:0000250" key="1"/>
<evidence type="ECO:0000269" key="2">
    <source>
    </source>
</evidence>
<evidence type="ECO:0000305" key="3"/>
<evidence type="ECO:0000312" key="4">
    <source>
        <dbReference type="HGNC" id="HGNC:23825"/>
    </source>
</evidence>
<reference key="1">
    <citation type="submission" date="2003-08" db="EMBL/GenBank/DDBJ databases">
        <title>Characterization of the human Mob-1 like proteins.</title>
        <authorList>
            <person name="Florindo C.S."/>
            <person name="Tavares A.A."/>
        </authorList>
    </citation>
    <scope>NUCLEOTIDE SEQUENCE [MRNA]</scope>
</reference>
<reference key="2">
    <citation type="journal article" date="2007" name="BMC Genomics">
        <title>The full-ORF clone resource of the German cDNA consortium.</title>
        <authorList>
            <person name="Bechtel S."/>
            <person name="Rosenfelder H."/>
            <person name="Duda A."/>
            <person name="Schmidt C.P."/>
            <person name="Ernst U."/>
            <person name="Wellenreuther R."/>
            <person name="Mehrle A."/>
            <person name="Schuster C."/>
            <person name="Bahr A."/>
            <person name="Bloecker H."/>
            <person name="Heubner D."/>
            <person name="Hoerlein A."/>
            <person name="Michel G."/>
            <person name="Wedler H."/>
            <person name="Koehrer K."/>
            <person name="Ottenwaelder B."/>
            <person name="Poustka A."/>
            <person name="Wiemann S."/>
            <person name="Schupp I."/>
        </authorList>
    </citation>
    <scope>NUCLEOTIDE SEQUENCE [LARGE SCALE MRNA]</scope>
    <source>
        <tissue>Spinal cord</tissue>
    </source>
</reference>
<reference key="3">
    <citation type="journal article" date="2004" name="Nat. Genet.">
        <title>Complete sequencing and characterization of 21,243 full-length human cDNAs.</title>
        <authorList>
            <person name="Ota T."/>
            <person name="Suzuki Y."/>
            <person name="Nishikawa T."/>
            <person name="Otsuki T."/>
            <person name="Sugiyama T."/>
            <person name="Irie R."/>
            <person name="Wakamatsu A."/>
            <person name="Hayashi K."/>
            <person name="Sato H."/>
            <person name="Nagai K."/>
            <person name="Kimura K."/>
            <person name="Makita H."/>
            <person name="Sekine M."/>
            <person name="Obayashi M."/>
            <person name="Nishi T."/>
            <person name="Shibahara T."/>
            <person name="Tanaka T."/>
            <person name="Ishii S."/>
            <person name="Yamamoto J."/>
            <person name="Saito K."/>
            <person name="Kawai Y."/>
            <person name="Isono Y."/>
            <person name="Nakamura Y."/>
            <person name="Nagahari K."/>
            <person name="Murakami K."/>
            <person name="Yasuda T."/>
            <person name="Iwayanagi T."/>
            <person name="Wagatsuma M."/>
            <person name="Shiratori A."/>
            <person name="Sudo H."/>
            <person name="Hosoiri T."/>
            <person name="Kaku Y."/>
            <person name="Kodaira H."/>
            <person name="Kondo H."/>
            <person name="Sugawara M."/>
            <person name="Takahashi M."/>
            <person name="Kanda K."/>
            <person name="Yokoi T."/>
            <person name="Furuya T."/>
            <person name="Kikkawa E."/>
            <person name="Omura Y."/>
            <person name="Abe K."/>
            <person name="Kamihara K."/>
            <person name="Katsuta N."/>
            <person name="Sato K."/>
            <person name="Tanikawa M."/>
            <person name="Yamazaki M."/>
            <person name="Ninomiya K."/>
            <person name="Ishibashi T."/>
            <person name="Yamashita H."/>
            <person name="Murakawa K."/>
            <person name="Fujimori K."/>
            <person name="Tanai H."/>
            <person name="Kimata M."/>
            <person name="Watanabe M."/>
            <person name="Hiraoka S."/>
            <person name="Chiba Y."/>
            <person name="Ishida S."/>
            <person name="Ono Y."/>
            <person name="Takiguchi S."/>
            <person name="Watanabe S."/>
            <person name="Yosida M."/>
            <person name="Hotuta T."/>
            <person name="Kusano J."/>
            <person name="Kanehori K."/>
            <person name="Takahashi-Fujii A."/>
            <person name="Hara H."/>
            <person name="Tanase T.-O."/>
            <person name="Nomura Y."/>
            <person name="Togiya S."/>
            <person name="Komai F."/>
            <person name="Hara R."/>
            <person name="Takeuchi K."/>
            <person name="Arita M."/>
            <person name="Imose N."/>
            <person name="Musashino K."/>
            <person name="Yuuki H."/>
            <person name="Oshima A."/>
            <person name="Sasaki N."/>
            <person name="Aotsuka S."/>
            <person name="Yoshikawa Y."/>
            <person name="Matsunawa H."/>
            <person name="Ichihara T."/>
            <person name="Shiohata N."/>
            <person name="Sano S."/>
            <person name="Moriya S."/>
            <person name="Momiyama H."/>
            <person name="Satoh N."/>
            <person name="Takami S."/>
            <person name="Terashima Y."/>
            <person name="Suzuki O."/>
            <person name="Nakagawa S."/>
            <person name="Senoh A."/>
            <person name="Mizoguchi H."/>
            <person name="Goto Y."/>
            <person name="Shimizu F."/>
            <person name="Wakebe H."/>
            <person name="Hishigaki H."/>
            <person name="Watanabe T."/>
            <person name="Sugiyama A."/>
            <person name="Takemoto M."/>
            <person name="Kawakami B."/>
            <person name="Yamazaki M."/>
            <person name="Watanabe K."/>
            <person name="Kumagai A."/>
            <person name="Itakura S."/>
            <person name="Fukuzumi Y."/>
            <person name="Fujimori Y."/>
            <person name="Komiyama M."/>
            <person name="Tashiro H."/>
            <person name="Tanigami A."/>
            <person name="Fujiwara T."/>
            <person name="Ono T."/>
            <person name="Yamada K."/>
            <person name="Fujii Y."/>
            <person name="Ozaki K."/>
            <person name="Hirao M."/>
            <person name="Ohmori Y."/>
            <person name="Kawabata A."/>
            <person name="Hikiji T."/>
            <person name="Kobatake N."/>
            <person name="Inagaki H."/>
            <person name="Ikema Y."/>
            <person name="Okamoto S."/>
            <person name="Okitani R."/>
            <person name="Kawakami T."/>
            <person name="Noguchi S."/>
            <person name="Itoh T."/>
            <person name="Shigeta K."/>
            <person name="Senba T."/>
            <person name="Matsumura K."/>
            <person name="Nakajima Y."/>
            <person name="Mizuno T."/>
            <person name="Morinaga M."/>
            <person name="Sasaki M."/>
            <person name="Togashi T."/>
            <person name="Oyama M."/>
            <person name="Hata H."/>
            <person name="Watanabe M."/>
            <person name="Komatsu T."/>
            <person name="Mizushima-Sugano J."/>
            <person name="Satoh T."/>
            <person name="Shirai Y."/>
            <person name="Takahashi Y."/>
            <person name="Nakagawa K."/>
            <person name="Okumura K."/>
            <person name="Nagase T."/>
            <person name="Nomura N."/>
            <person name="Kikuchi H."/>
            <person name="Masuho Y."/>
            <person name="Yamashita R."/>
            <person name="Nakai K."/>
            <person name="Yada T."/>
            <person name="Nakamura Y."/>
            <person name="Ohara O."/>
            <person name="Isogai T."/>
            <person name="Sugano S."/>
        </authorList>
    </citation>
    <scope>NUCLEOTIDE SEQUENCE [LARGE SCALE MRNA]</scope>
</reference>
<reference key="4">
    <citation type="submission" date="2004-06" db="EMBL/GenBank/DDBJ databases">
        <title>Cloning of human full open reading frames in Gateway(TM) system entry vector (pDONR201).</title>
        <authorList>
            <person name="Ebert L."/>
            <person name="Schick M."/>
            <person name="Neubert P."/>
            <person name="Schatten R."/>
            <person name="Henze S."/>
            <person name="Korn B."/>
        </authorList>
    </citation>
    <scope>NUCLEOTIDE SEQUENCE [LARGE SCALE MRNA]</scope>
</reference>
<reference key="5">
    <citation type="journal article" date="2004" name="Genome Res.">
        <title>The status, quality, and expansion of the NIH full-length cDNA project: the Mammalian Gene Collection (MGC).</title>
        <authorList>
            <consortium name="The MGC Project Team"/>
        </authorList>
    </citation>
    <scope>NUCLEOTIDE SEQUENCE [LARGE SCALE MRNA]</scope>
    <source>
        <tissue>Testis</tissue>
    </source>
</reference>
<reference key="6">
    <citation type="journal article" date="2011" name="BMC Syst. Biol.">
        <title>Initial characterization of the human central proteome.</title>
        <authorList>
            <person name="Burkard T.R."/>
            <person name="Planyavsky M."/>
            <person name="Kaupe I."/>
            <person name="Breitwieser F.P."/>
            <person name="Buerckstuemmer T."/>
            <person name="Bennett K.L."/>
            <person name="Superti-Furga G."/>
            <person name="Colinge J."/>
        </authorList>
    </citation>
    <scope>IDENTIFICATION BY MASS SPECTROMETRY [LARGE SCALE ANALYSIS]</scope>
</reference>
<reference key="7">
    <citation type="journal article" date="2017" name="Nature">
        <title>Genome-scale activation screen identifies a lncRNA locus regulating a gene neighbourhood.</title>
        <authorList>
            <person name="Joung J."/>
            <person name="Engreitz J.M."/>
            <person name="Konermann S."/>
            <person name="Abudayyeh O.O."/>
            <person name="Verdine V.K."/>
            <person name="Aguet F."/>
            <person name="Gootenberg J.S."/>
            <person name="Sanjana N.E."/>
            <person name="Wright J.B."/>
            <person name="Fulco C.P."/>
            <person name="Tseng Y.Y."/>
            <person name="Yoon C.H."/>
            <person name="Boehm J.S."/>
            <person name="Lander E.S."/>
            <person name="Zhang F."/>
        </authorList>
    </citation>
    <scope>FUNCTION</scope>
    <scope>INDUCTION BY EMICERI</scope>
</reference>
<dbReference type="EMBL" id="AJ580636">
    <property type="protein sequence ID" value="CAE45268.1"/>
    <property type="molecule type" value="mRNA"/>
</dbReference>
<dbReference type="EMBL" id="AL832572">
    <property type="protein sequence ID" value="CAD89934.1"/>
    <property type="molecule type" value="mRNA"/>
</dbReference>
<dbReference type="EMBL" id="AK023266">
    <property type="protein sequence ID" value="BAB14497.1"/>
    <property type="molecule type" value="mRNA"/>
</dbReference>
<dbReference type="EMBL" id="CR457307">
    <property type="protein sequence ID" value="CAG33588.1"/>
    <property type="molecule type" value="mRNA"/>
</dbReference>
<dbReference type="EMBL" id="BC033027">
    <property type="protein sequence ID" value="AAH33027.1"/>
    <property type="molecule type" value="mRNA"/>
</dbReference>
<dbReference type="CCDS" id="CCDS6520.1"/>
<dbReference type="RefSeq" id="NP_079037.3">
    <property type="nucleotide sequence ID" value="NM_024761.4"/>
</dbReference>
<dbReference type="RefSeq" id="XP_047279847.1">
    <property type="nucleotide sequence ID" value="XM_047423891.1"/>
</dbReference>
<dbReference type="RefSeq" id="XP_047279848.1">
    <property type="nucleotide sequence ID" value="XM_047423892.1"/>
</dbReference>
<dbReference type="RefSeq" id="XP_047279849.1">
    <property type="nucleotide sequence ID" value="XM_047423893.1"/>
</dbReference>
<dbReference type="RefSeq" id="XP_047279850.1">
    <property type="nucleotide sequence ID" value="XM_047423894.1"/>
</dbReference>
<dbReference type="RefSeq" id="XP_047279851.1">
    <property type="nucleotide sequence ID" value="XM_047423895.1"/>
</dbReference>
<dbReference type="RefSeq" id="XP_054219832.1">
    <property type="nucleotide sequence ID" value="XM_054363857.1"/>
</dbReference>
<dbReference type="RefSeq" id="XP_054219833.1">
    <property type="nucleotide sequence ID" value="XM_054363858.1"/>
</dbReference>
<dbReference type="RefSeq" id="XP_054219834.1">
    <property type="nucleotide sequence ID" value="XM_054363859.1"/>
</dbReference>
<dbReference type="RefSeq" id="XP_054219835.1">
    <property type="nucleotide sequence ID" value="XM_054363860.1"/>
</dbReference>
<dbReference type="SMR" id="Q86TA1"/>
<dbReference type="BioGRID" id="122912">
    <property type="interactions" value="32"/>
</dbReference>
<dbReference type="FunCoup" id="Q86TA1">
    <property type="interactions" value="1720"/>
</dbReference>
<dbReference type="IntAct" id="Q86TA1">
    <property type="interactions" value="4"/>
</dbReference>
<dbReference type="MINT" id="Q86TA1"/>
<dbReference type="STRING" id="9606.ENSP00000262244"/>
<dbReference type="iPTMnet" id="Q86TA1"/>
<dbReference type="PhosphoSitePlus" id="Q86TA1"/>
<dbReference type="BioMuta" id="MOB3B"/>
<dbReference type="DMDM" id="56749334"/>
<dbReference type="jPOST" id="Q86TA1"/>
<dbReference type="MassIVE" id="Q86TA1"/>
<dbReference type="PaxDb" id="9606-ENSP00000262244"/>
<dbReference type="PeptideAtlas" id="Q86TA1"/>
<dbReference type="ProteomicsDB" id="69676"/>
<dbReference type="Pumba" id="Q86TA1"/>
<dbReference type="Antibodypedia" id="56611">
    <property type="antibodies" value="318 antibodies from 22 providers"/>
</dbReference>
<dbReference type="DNASU" id="79817"/>
<dbReference type="Ensembl" id="ENST00000262244.6">
    <property type="protein sequence ID" value="ENSP00000262244.5"/>
    <property type="gene ID" value="ENSG00000120162.10"/>
</dbReference>
<dbReference type="GeneID" id="79817"/>
<dbReference type="KEGG" id="hsa:79817"/>
<dbReference type="MANE-Select" id="ENST00000262244.6">
    <property type="protein sequence ID" value="ENSP00000262244.5"/>
    <property type="RefSeq nucleotide sequence ID" value="NM_024761.5"/>
    <property type="RefSeq protein sequence ID" value="NP_079037.3"/>
</dbReference>
<dbReference type="UCSC" id="uc003zqn.4">
    <property type="organism name" value="human"/>
</dbReference>
<dbReference type="AGR" id="HGNC:23825"/>
<dbReference type="CTD" id="79817"/>
<dbReference type="DisGeNET" id="79817"/>
<dbReference type="GeneCards" id="MOB3B"/>
<dbReference type="HGNC" id="HGNC:23825">
    <property type="gene designation" value="MOB3B"/>
</dbReference>
<dbReference type="HPA" id="ENSG00000120162">
    <property type="expression patterns" value="Tissue enhanced (brain)"/>
</dbReference>
<dbReference type="MIM" id="617652">
    <property type="type" value="gene"/>
</dbReference>
<dbReference type="neXtProt" id="NX_Q86TA1"/>
<dbReference type="OpenTargets" id="ENSG00000120162"/>
<dbReference type="PharmGKB" id="PA134886513"/>
<dbReference type="VEuPathDB" id="HostDB:ENSG00000120162"/>
<dbReference type="eggNOG" id="KOG1903">
    <property type="taxonomic scope" value="Eukaryota"/>
</dbReference>
<dbReference type="GeneTree" id="ENSGT01120000271863"/>
<dbReference type="HOGENOM" id="CLU_038321_3_0_1"/>
<dbReference type="InParanoid" id="Q86TA1"/>
<dbReference type="OMA" id="WIEIRIN"/>
<dbReference type="OrthoDB" id="8170117at2759"/>
<dbReference type="PAN-GO" id="Q86TA1">
    <property type="GO annotations" value="5 GO annotations based on evolutionary models"/>
</dbReference>
<dbReference type="PhylomeDB" id="Q86TA1"/>
<dbReference type="TreeFam" id="TF300789"/>
<dbReference type="PathwayCommons" id="Q86TA1"/>
<dbReference type="SignaLink" id="Q86TA1"/>
<dbReference type="BioGRID-ORCS" id="79817">
    <property type="hits" value="7 hits in 1153 CRISPR screens"/>
</dbReference>
<dbReference type="ChiTaRS" id="MOB3B">
    <property type="organism name" value="human"/>
</dbReference>
<dbReference type="GenomeRNAi" id="79817"/>
<dbReference type="Pharos" id="Q86TA1">
    <property type="development level" value="Tbio"/>
</dbReference>
<dbReference type="PRO" id="PR:Q86TA1"/>
<dbReference type="Proteomes" id="UP000005640">
    <property type="component" value="Chromosome 9"/>
</dbReference>
<dbReference type="RNAct" id="Q86TA1">
    <property type="molecule type" value="protein"/>
</dbReference>
<dbReference type="Bgee" id="ENSG00000120162">
    <property type="expression patterns" value="Expressed in inferior vagus X ganglion and 189 other cell types or tissues"/>
</dbReference>
<dbReference type="GO" id="GO:0005737">
    <property type="term" value="C:cytoplasm"/>
    <property type="evidence" value="ECO:0000318"/>
    <property type="project" value="GO_Central"/>
</dbReference>
<dbReference type="GO" id="GO:0005634">
    <property type="term" value="C:nucleus"/>
    <property type="evidence" value="ECO:0000318"/>
    <property type="project" value="GO_Central"/>
</dbReference>
<dbReference type="GO" id="GO:0046872">
    <property type="term" value="F:metal ion binding"/>
    <property type="evidence" value="ECO:0007669"/>
    <property type="project" value="UniProtKB-KW"/>
</dbReference>
<dbReference type="GO" id="GO:0030295">
    <property type="term" value="F:protein kinase activator activity"/>
    <property type="evidence" value="ECO:0000318"/>
    <property type="project" value="GO_Central"/>
</dbReference>
<dbReference type="GO" id="GO:0035330">
    <property type="term" value="P:regulation of hippo signaling"/>
    <property type="evidence" value="ECO:0000315"/>
    <property type="project" value="UniProtKB"/>
</dbReference>
<dbReference type="GO" id="GO:0007165">
    <property type="term" value="P:signal transduction"/>
    <property type="evidence" value="ECO:0000318"/>
    <property type="project" value="GO_Central"/>
</dbReference>
<dbReference type="FunFam" id="1.20.140.30:FF:000001">
    <property type="entry name" value="MOB kinase activator 1A"/>
    <property type="match status" value="1"/>
</dbReference>
<dbReference type="Gene3D" id="1.20.140.30">
    <property type="entry name" value="MOB kinase activator"/>
    <property type="match status" value="1"/>
</dbReference>
<dbReference type="InterPro" id="IPR005301">
    <property type="entry name" value="MOB_kinase_act_fam"/>
</dbReference>
<dbReference type="InterPro" id="IPR036703">
    <property type="entry name" value="MOB_kinase_act_sf"/>
</dbReference>
<dbReference type="PANTHER" id="PTHR22599">
    <property type="entry name" value="MPS ONE BINDER KINASE ACTIVATOR-LIKE MOB"/>
    <property type="match status" value="1"/>
</dbReference>
<dbReference type="Pfam" id="PF03637">
    <property type="entry name" value="Mob1_phocein"/>
    <property type="match status" value="1"/>
</dbReference>
<dbReference type="SMART" id="SM01388">
    <property type="entry name" value="Mob1_phocein"/>
    <property type="match status" value="1"/>
</dbReference>
<dbReference type="SUPFAM" id="SSF101152">
    <property type="entry name" value="Mob1/phocein"/>
    <property type="match status" value="1"/>
</dbReference>
<feature type="chain" id="PRO_0000193572" description="MOB kinase activator 3B">
    <location>
        <begin position="1"/>
        <end position="216"/>
    </location>
</feature>
<feature type="binding site" evidence="1">
    <location>
        <position position="82"/>
    </location>
    <ligand>
        <name>Zn(2+)</name>
        <dbReference type="ChEBI" id="CHEBI:29105"/>
    </ligand>
</feature>
<feature type="binding site" evidence="1">
    <location>
        <position position="87"/>
    </location>
    <ligand>
        <name>Zn(2+)</name>
        <dbReference type="ChEBI" id="CHEBI:29105"/>
    </ligand>
</feature>
<feature type="binding site" evidence="1">
    <location>
        <position position="164"/>
    </location>
    <ligand>
        <name>Zn(2+)</name>
        <dbReference type="ChEBI" id="CHEBI:29105"/>
    </ligand>
</feature>
<feature type="binding site" evidence="1">
    <location>
        <position position="169"/>
    </location>
    <ligand>
        <name>Zn(2+)</name>
        <dbReference type="ChEBI" id="CHEBI:29105"/>
    </ligand>
</feature>
<feature type="sequence conflict" description="In Ref. 2; CAD89934." evidence="3" ref="2">
    <original>F</original>
    <variation>L</variation>
    <location>
        <position position="67"/>
    </location>
</feature>
<feature type="sequence conflict" description="In Ref. 5; AAH33027." evidence="3" ref="5">
    <original>K</original>
    <variation>M</variation>
    <location>
        <position position="152"/>
    </location>
</feature>
<sequence>MSIALKQVFNKDKTFRPKRKFEPGTQRFELHKRAQASLNSGVDLKAAVQLPSGEDQNDWVAVHVVDFFNRINLIYGTICEFCTERTCPVMSGGPKYEYRWQDDLKYKKPTALPAPQYMNLLMDWIEVQINNEEIFPTCVGVPFPKNFLQICKKILCRLFRVFVHVYIHHFDRVIVMGAEAHVNTCYKHFYYFVTEMNLIDRKELEPLKEMTSRMCH</sequence>
<name>MOB3B_HUMAN</name>
<comment type="function">
    <text evidence="2">Modulates LATS1 expression in the Hippo signaling pathway which plays a pivotal role in organ size control and tumor suppression by restricting proliferation and promoting apoptosis.</text>
</comment>
<comment type="interaction">
    <interactant intactId="EBI-751703">
        <id>Q86TA1</id>
    </interactant>
    <interactant intactId="EBI-742084">
        <id>P49902</id>
        <label>NT5C2</label>
    </interactant>
    <organismsDiffer>false</organismsDiffer>
    <experiments>3</experiments>
</comment>
<comment type="interaction">
    <interactant intactId="EBI-751703">
        <id>Q86TA1</id>
    </interactant>
    <interactant intactId="EBI-992580">
        <id>Q13188</id>
        <label>STK3</label>
    </interactant>
    <organismsDiffer>false</organismsDiffer>
    <experiments>3</experiments>
</comment>
<comment type="induction">
    <text evidence="2">Expression at transcriptional level is activated by the expression of the neighboring long non-coding RNA (lncRNA) EMICERI.</text>
</comment>
<comment type="similarity">
    <text evidence="3">Belongs to the MOB1/phocein family.</text>
</comment>
<protein>
    <recommendedName>
        <fullName>MOB kinase activator 3B</fullName>
    </recommendedName>
    <alternativeName>
        <fullName>Mob1 homolog 2b</fullName>
    </alternativeName>
    <alternativeName>
        <fullName>Mps one binder kinase activator-like 2B</fullName>
        <shortName>MOB kinase activator-like 2B</shortName>
    </alternativeName>
</protein>
<accession>Q86TA1</accession>
<accession>Q8NEB4</accession>
<accession>Q9H8V4</accession>
<organism>
    <name type="scientific">Homo sapiens</name>
    <name type="common">Human</name>
    <dbReference type="NCBI Taxonomy" id="9606"/>
    <lineage>
        <taxon>Eukaryota</taxon>
        <taxon>Metazoa</taxon>
        <taxon>Chordata</taxon>
        <taxon>Craniata</taxon>
        <taxon>Vertebrata</taxon>
        <taxon>Euteleostomi</taxon>
        <taxon>Mammalia</taxon>
        <taxon>Eutheria</taxon>
        <taxon>Euarchontoglires</taxon>
        <taxon>Primates</taxon>
        <taxon>Haplorrhini</taxon>
        <taxon>Catarrhini</taxon>
        <taxon>Hominidae</taxon>
        <taxon>Homo</taxon>
    </lineage>
</organism>
<gene>
    <name evidence="4" type="primary">MOB3B</name>
    <name evidence="4" type="synonym">C9orf35</name>
    <name evidence="4" type="synonym">MOBKL2B</name>
</gene>
<proteinExistence type="evidence at protein level"/>
<keyword id="KW-0479">Metal-binding</keyword>
<keyword id="KW-1267">Proteomics identification</keyword>
<keyword id="KW-1185">Reference proteome</keyword>
<keyword id="KW-0862">Zinc</keyword>